<proteinExistence type="inferred from homology"/>
<reference key="1">
    <citation type="journal article" date="2010" name="Appl. Environ. Microbiol.">
        <title>The genome sequence of Psychrobacter arcticus 273-4, a psychroactive Siberian permafrost bacterium, reveals mechanisms for adaptation to low-temperature growth.</title>
        <authorList>
            <person name="Ayala-del-Rio H.L."/>
            <person name="Chain P.S."/>
            <person name="Grzymski J.J."/>
            <person name="Ponder M.A."/>
            <person name="Ivanova N."/>
            <person name="Bergholz P.W."/>
            <person name="Di Bartolo G."/>
            <person name="Hauser L."/>
            <person name="Land M."/>
            <person name="Bakermans C."/>
            <person name="Rodrigues D."/>
            <person name="Klappenbach J."/>
            <person name="Zarka D."/>
            <person name="Larimer F."/>
            <person name="Richardson P."/>
            <person name="Murray A."/>
            <person name="Thomashow M."/>
            <person name="Tiedje J.M."/>
        </authorList>
    </citation>
    <scope>NUCLEOTIDE SEQUENCE [LARGE SCALE GENOMIC DNA]</scope>
    <source>
        <strain>DSM 17307 / VKM B-2377 / 273-4</strain>
    </source>
</reference>
<name>ISPE_PSYA2</name>
<protein>
    <recommendedName>
        <fullName evidence="1">4-diphosphocytidyl-2-C-methyl-D-erythritol kinase</fullName>
        <shortName evidence="1">CMK</shortName>
        <ecNumber evidence="1">2.7.1.148</ecNumber>
    </recommendedName>
    <alternativeName>
        <fullName evidence="1">4-(cytidine-5'-diphospho)-2-C-methyl-D-erythritol kinase</fullName>
    </alternativeName>
</protein>
<evidence type="ECO:0000255" key="1">
    <source>
        <dbReference type="HAMAP-Rule" id="MF_00061"/>
    </source>
</evidence>
<organism>
    <name type="scientific">Psychrobacter arcticus (strain DSM 17307 / VKM B-2377 / 273-4)</name>
    <dbReference type="NCBI Taxonomy" id="259536"/>
    <lineage>
        <taxon>Bacteria</taxon>
        <taxon>Pseudomonadati</taxon>
        <taxon>Pseudomonadota</taxon>
        <taxon>Gammaproteobacteria</taxon>
        <taxon>Moraxellales</taxon>
        <taxon>Moraxellaceae</taxon>
        <taxon>Psychrobacter</taxon>
    </lineage>
</organism>
<dbReference type="EC" id="2.7.1.148" evidence="1"/>
<dbReference type="EMBL" id="CP000082">
    <property type="protein sequence ID" value="AAZ18046.1"/>
    <property type="molecule type" value="Genomic_DNA"/>
</dbReference>
<dbReference type="RefSeq" id="WP_011279485.1">
    <property type="nucleotide sequence ID" value="NC_007204.1"/>
</dbReference>
<dbReference type="SMR" id="Q4FVB2"/>
<dbReference type="STRING" id="259536.Psyc_0173"/>
<dbReference type="KEGG" id="par:Psyc_0173"/>
<dbReference type="eggNOG" id="COG1947">
    <property type="taxonomic scope" value="Bacteria"/>
</dbReference>
<dbReference type="HOGENOM" id="CLU_053057_3_0_6"/>
<dbReference type="OrthoDB" id="9809438at2"/>
<dbReference type="UniPathway" id="UPA00056">
    <property type="reaction ID" value="UER00094"/>
</dbReference>
<dbReference type="Proteomes" id="UP000000546">
    <property type="component" value="Chromosome"/>
</dbReference>
<dbReference type="GO" id="GO:0050515">
    <property type="term" value="F:4-(cytidine 5'-diphospho)-2-C-methyl-D-erythritol kinase activity"/>
    <property type="evidence" value="ECO:0007669"/>
    <property type="project" value="UniProtKB-UniRule"/>
</dbReference>
<dbReference type="GO" id="GO:0005524">
    <property type="term" value="F:ATP binding"/>
    <property type="evidence" value="ECO:0007669"/>
    <property type="project" value="UniProtKB-UniRule"/>
</dbReference>
<dbReference type="GO" id="GO:0019288">
    <property type="term" value="P:isopentenyl diphosphate biosynthetic process, methylerythritol 4-phosphate pathway"/>
    <property type="evidence" value="ECO:0007669"/>
    <property type="project" value="UniProtKB-UniRule"/>
</dbReference>
<dbReference type="GO" id="GO:0016114">
    <property type="term" value="P:terpenoid biosynthetic process"/>
    <property type="evidence" value="ECO:0007669"/>
    <property type="project" value="InterPro"/>
</dbReference>
<dbReference type="Gene3D" id="3.30.230.10">
    <property type="match status" value="1"/>
</dbReference>
<dbReference type="Gene3D" id="3.30.70.890">
    <property type="entry name" value="GHMP kinase, C-terminal domain"/>
    <property type="match status" value="1"/>
</dbReference>
<dbReference type="HAMAP" id="MF_00061">
    <property type="entry name" value="IspE"/>
    <property type="match status" value="1"/>
</dbReference>
<dbReference type="InterPro" id="IPR036554">
    <property type="entry name" value="GHMP_kinase_C_sf"/>
</dbReference>
<dbReference type="InterPro" id="IPR006204">
    <property type="entry name" value="GHMP_kinase_N_dom"/>
</dbReference>
<dbReference type="InterPro" id="IPR004424">
    <property type="entry name" value="IspE"/>
</dbReference>
<dbReference type="InterPro" id="IPR020568">
    <property type="entry name" value="Ribosomal_Su5_D2-typ_SF"/>
</dbReference>
<dbReference type="InterPro" id="IPR014721">
    <property type="entry name" value="Ribsml_uS5_D2-typ_fold_subgr"/>
</dbReference>
<dbReference type="NCBIfam" id="TIGR00154">
    <property type="entry name" value="ispE"/>
    <property type="match status" value="1"/>
</dbReference>
<dbReference type="PANTHER" id="PTHR43527">
    <property type="entry name" value="4-DIPHOSPHOCYTIDYL-2-C-METHYL-D-ERYTHRITOL KINASE, CHLOROPLASTIC"/>
    <property type="match status" value="1"/>
</dbReference>
<dbReference type="PANTHER" id="PTHR43527:SF2">
    <property type="entry name" value="4-DIPHOSPHOCYTIDYL-2-C-METHYL-D-ERYTHRITOL KINASE, CHLOROPLASTIC"/>
    <property type="match status" value="1"/>
</dbReference>
<dbReference type="Pfam" id="PF00288">
    <property type="entry name" value="GHMP_kinases_N"/>
    <property type="match status" value="1"/>
</dbReference>
<dbReference type="PIRSF" id="PIRSF010376">
    <property type="entry name" value="IspE"/>
    <property type="match status" value="1"/>
</dbReference>
<dbReference type="SUPFAM" id="SSF55060">
    <property type="entry name" value="GHMP Kinase, C-terminal domain"/>
    <property type="match status" value="1"/>
</dbReference>
<dbReference type="SUPFAM" id="SSF54211">
    <property type="entry name" value="Ribosomal protein S5 domain 2-like"/>
    <property type="match status" value="1"/>
</dbReference>
<accession>Q4FVB2</accession>
<feature type="chain" id="PRO_0000235122" description="4-diphosphocytidyl-2-C-methyl-D-erythritol kinase">
    <location>
        <begin position="1"/>
        <end position="322"/>
    </location>
</feature>
<feature type="active site" evidence="1">
    <location>
        <position position="18"/>
    </location>
</feature>
<feature type="active site" evidence="1">
    <location>
        <position position="172"/>
    </location>
</feature>
<feature type="binding site" evidence="1">
    <location>
        <begin position="130"/>
        <end position="140"/>
    </location>
    <ligand>
        <name>ATP</name>
        <dbReference type="ChEBI" id="CHEBI:30616"/>
    </ligand>
</feature>
<sequence length="322" mass="34726">MTKNAPTASVITRLSPAKINLFLHITGKRADGYHNLQTVFRLLDWGDYLHFSVANKPMATIDSAVDNSAVDINSLCGQLLTLDGAEAITSSIEDNLIFKAARTLLAAAIDSSKLPEHLPKVLVTLDKHLPMGAGLGGGSSNAATTLLVLNEIWQLNFNQETLIKIGAKIGADVPIFIFGQDAIATGIGEQLTAIDLPDQQYLVLTPNAHVNTAKLFAHPKLPRDITLLSIETIKNQYDNYVQTLIAPYHNVFTPVVTSLAPAVDEGLRYLQGLEKIALGTARMTGSGSTVFLPLDASVTDDKLLLSKWIEEAPCTAYVVRSL</sequence>
<gene>
    <name evidence="1" type="primary">ispE</name>
    <name type="ordered locus">Psyc_0173</name>
</gene>
<keyword id="KW-0067">ATP-binding</keyword>
<keyword id="KW-0414">Isoprene biosynthesis</keyword>
<keyword id="KW-0418">Kinase</keyword>
<keyword id="KW-0547">Nucleotide-binding</keyword>
<keyword id="KW-1185">Reference proteome</keyword>
<keyword id="KW-0808">Transferase</keyword>
<comment type="function">
    <text evidence="1">Catalyzes the phosphorylation of the position 2 hydroxy group of 4-diphosphocytidyl-2C-methyl-D-erythritol.</text>
</comment>
<comment type="catalytic activity">
    <reaction evidence="1">
        <text>4-CDP-2-C-methyl-D-erythritol + ATP = 4-CDP-2-C-methyl-D-erythritol 2-phosphate + ADP + H(+)</text>
        <dbReference type="Rhea" id="RHEA:18437"/>
        <dbReference type="ChEBI" id="CHEBI:15378"/>
        <dbReference type="ChEBI" id="CHEBI:30616"/>
        <dbReference type="ChEBI" id="CHEBI:57823"/>
        <dbReference type="ChEBI" id="CHEBI:57919"/>
        <dbReference type="ChEBI" id="CHEBI:456216"/>
        <dbReference type="EC" id="2.7.1.148"/>
    </reaction>
</comment>
<comment type="pathway">
    <text evidence="1">Isoprenoid biosynthesis; isopentenyl diphosphate biosynthesis via DXP pathway; isopentenyl diphosphate from 1-deoxy-D-xylulose 5-phosphate: step 3/6.</text>
</comment>
<comment type="similarity">
    <text evidence="1">Belongs to the GHMP kinase family. IspE subfamily.</text>
</comment>